<organism>
    <name type="scientific">Pasteurella multocida (strain Pm70)</name>
    <dbReference type="NCBI Taxonomy" id="272843"/>
    <lineage>
        <taxon>Bacteria</taxon>
        <taxon>Pseudomonadati</taxon>
        <taxon>Pseudomonadota</taxon>
        <taxon>Gammaproteobacteria</taxon>
        <taxon>Pasteurellales</taxon>
        <taxon>Pasteurellaceae</taxon>
        <taxon>Pasteurella</taxon>
    </lineage>
</organism>
<feature type="chain" id="PRO_0000095019" description="tRNA 5-methylaminomethyl-2-thiouridine biosynthesis bifunctional protein MnmC">
    <location>
        <begin position="1"/>
        <end position="672"/>
    </location>
</feature>
<feature type="region of interest" description="tRNA (mnm(5)s(2)U34)-methyltransferase">
    <location>
        <begin position="1"/>
        <end position="241"/>
    </location>
</feature>
<feature type="region of interest" description="FAD-dependent cmnm(5)s(2)U34 oxidoreductase">
    <location>
        <begin position="269"/>
        <end position="672"/>
    </location>
</feature>
<sequence>MHKVQFADVHFNAENTPVSAQFDDVYFSNQDGLAESHYIFQEGNQLWQRWQQTSEAHFVIAETGFGTGLNFFAVTQRFREFRLTYPDAPLKRLFFISFEKYPLPLAQLKRAHQAYPEFQSLAQQLQQSWLEPIVGCYRFHFAETTLDLWFGDMAENLPQLGDYMCNKIDAWFLDGFAPSKNPQMWQDTLYQHMYRYTKTQGTFSTFTAASAVRKGLIHAGFTVTKRKGYGKKRECLQGVKAQQQPADIHAPWALVQPAELTENADIALIGGGIASVFSALSLLERGAKVTVYCEDNSLAANASGNKQGAFYPQLSDDDLRYIRFYIHAFAYGKQRFNWAIEQGITFEHDFCGVALCAYDAKSAVKLAKISALQLPPSLYQPLSQQALSEQVGLPLPCDGGFIAQGAWLSPQQFVQNTFDFLATRGVIIKTQQKITALERQTTHWLLTTEQGDSFKHQVVVLANGHKLTQFRQTEHLPVYPVRGQVSEIATSTELSKLKAVICYDGYLTPKAASQTHCLGASHLRDNAERAFSLQEQQENQQKIQTNLASVDWVNEVDTRNNQARIGIRCSVRDRIPMLGNVPDFEQQLSDYHNLYNLRRRKHAIKHAALHPNLFLIGALGSRGLTSAPLLAETLASLIYHEPLPLSEDILHQLNANRSWIRKLLKGSQVKQG</sequence>
<keyword id="KW-0963">Cytoplasm</keyword>
<keyword id="KW-0274">FAD</keyword>
<keyword id="KW-0285">Flavoprotein</keyword>
<keyword id="KW-0489">Methyltransferase</keyword>
<keyword id="KW-0511">Multifunctional enzyme</keyword>
<keyword id="KW-0560">Oxidoreductase</keyword>
<keyword id="KW-1185">Reference proteome</keyword>
<keyword id="KW-0949">S-adenosyl-L-methionine</keyword>
<keyword id="KW-0808">Transferase</keyword>
<keyword id="KW-0819">tRNA processing</keyword>
<comment type="function">
    <text evidence="1">Catalyzes the last two steps in the biosynthesis of 5-methylaminomethyl-2-thiouridine (mnm(5)s(2)U) at the wobble position (U34) in tRNA. Catalyzes the FAD-dependent demodification of cmnm(5)s(2)U34 to nm(5)s(2)U34, followed by the transfer of a methyl group from S-adenosyl-L-methionine to nm(5)s(2)U34, to form mnm(5)s(2)U34.</text>
</comment>
<comment type="catalytic activity">
    <reaction evidence="1">
        <text>5-aminomethyl-2-thiouridine(34) in tRNA + S-adenosyl-L-methionine = 5-methylaminomethyl-2-thiouridine(34) in tRNA + S-adenosyl-L-homocysteine + H(+)</text>
        <dbReference type="Rhea" id="RHEA:19569"/>
        <dbReference type="Rhea" id="RHEA-COMP:10195"/>
        <dbReference type="Rhea" id="RHEA-COMP:10197"/>
        <dbReference type="ChEBI" id="CHEBI:15378"/>
        <dbReference type="ChEBI" id="CHEBI:57856"/>
        <dbReference type="ChEBI" id="CHEBI:59789"/>
        <dbReference type="ChEBI" id="CHEBI:74454"/>
        <dbReference type="ChEBI" id="CHEBI:74455"/>
        <dbReference type="EC" id="2.1.1.61"/>
    </reaction>
</comment>
<comment type="cofactor">
    <cofactor evidence="1">
        <name>FAD</name>
        <dbReference type="ChEBI" id="CHEBI:57692"/>
    </cofactor>
</comment>
<comment type="subcellular location">
    <subcellularLocation>
        <location evidence="1">Cytoplasm</location>
    </subcellularLocation>
</comment>
<comment type="similarity">
    <text evidence="1">In the N-terminal section; belongs to the methyltransferase superfamily. tRNA (mnm(5)s(2)U34)-methyltransferase family.</text>
</comment>
<comment type="similarity">
    <text evidence="1">In the C-terminal section; belongs to the DAO family.</text>
</comment>
<accession>Q9CNT7</accession>
<evidence type="ECO:0000255" key="1">
    <source>
        <dbReference type="HAMAP-Rule" id="MF_01102"/>
    </source>
</evidence>
<reference key="1">
    <citation type="journal article" date="2001" name="Proc. Natl. Acad. Sci. U.S.A.">
        <title>Complete genomic sequence of Pasteurella multocida Pm70.</title>
        <authorList>
            <person name="May B.J."/>
            <person name="Zhang Q."/>
            <person name="Li L.L."/>
            <person name="Paustian M.L."/>
            <person name="Whittam T.S."/>
            <person name="Kapur V."/>
        </authorList>
    </citation>
    <scope>NUCLEOTIDE SEQUENCE [LARGE SCALE GENOMIC DNA]</scope>
    <source>
        <strain>Pm70</strain>
    </source>
</reference>
<name>MNMC_PASMU</name>
<gene>
    <name evidence="1" type="primary">mnmC</name>
    <name type="ordered locus">PM0338</name>
</gene>
<protein>
    <recommendedName>
        <fullName evidence="1">tRNA 5-methylaminomethyl-2-thiouridine biosynthesis bifunctional protein MnmC</fullName>
        <shortName evidence="1">tRNA mnm(5)s(2)U biosynthesis bifunctional protein</shortName>
    </recommendedName>
    <domain>
        <recommendedName>
            <fullName evidence="1">tRNA (mnm(5)s(2)U34)-methyltransferase</fullName>
            <ecNumber evidence="1">2.1.1.61</ecNumber>
        </recommendedName>
    </domain>
    <domain>
        <recommendedName>
            <fullName evidence="1">FAD-dependent cmnm(5)s(2)U34 oxidoreductase</fullName>
            <ecNumber evidence="1">1.5.-.-</ecNumber>
        </recommendedName>
    </domain>
</protein>
<dbReference type="EC" id="2.1.1.61" evidence="1"/>
<dbReference type="EC" id="1.5.-.-" evidence="1"/>
<dbReference type="EMBL" id="AE004439">
    <property type="protein sequence ID" value="AAK02422.1"/>
    <property type="molecule type" value="Genomic_DNA"/>
</dbReference>
<dbReference type="RefSeq" id="WP_010906597.1">
    <property type="nucleotide sequence ID" value="NC_002663.1"/>
</dbReference>
<dbReference type="SMR" id="Q9CNT7"/>
<dbReference type="STRING" id="272843.PM0338"/>
<dbReference type="EnsemblBacteria" id="AAK02422">
    <property type="protein sequence ID" value="AAK02422"/>
    <property type="gene ID" value="PM0338"/>
</dbReference>
<dbReference type="KEGG" id="pmu:PM0338"/>
<dbReference type="PATRIC" id="fig|272843.6.peg.351"/>
<dbReference type="HOGENOM" id="CLU_022427_2_1_6"/>
<dbReference type="OrthoDB" id="9786494at2"/>
<dbReference type="Proteomes" id="UP000000809">
    <property type="component" value="Chromosome"/>
</dbReference>
<dbReference type="GO" id="GO:0005737">
    <property type="term" value="C:cytoplasm"/>
    <property type="evidence" value="ECO:0007669"/>
    <property type="project" value="UniProtKB-SubCell"/>
</dbReference>
<dbReference type="GO" id="GO:0050660">
    <property type="term" value="F:flavin adenine dinucleotide binding"/>
    <property type="evidence" value="ECO:0007669"/>
    <property type="project" value="UniProtKB-UniRule"/>
</dbReference>
<dbReference type="GO" id="GO:0016645">
    <property type="term" value="F:oxidoreductase activity, acting on the CH-NH group of donors"/>
    <property type="evidence" value="ECO:0007669"/>
    <property type="project" value="InterPro"/>
</dbReference>
<dbReference type="GO" id="GO:0004808">
    <property type="term" value="F:tRNA (5-methylaminomethyl-2-thiouridylate)(34)-methyltransferase activity"/>
    <property type="evidence" value="ECO:0007669"/>
    <property type="project" value="UniProtKB-EC"/>
</dbReference>
<dbReference type="GO" id="GO:0032259">
    <property type="term" value="P:methylation"/>
    <property type="evidence" value="ECO:0007669"/>
    <property type="project" value="UniProtKB-KW"/>
</dbReference>
<dbReference type="GO" id="GO:0002098">
    <property type="term" value="P:tRNA wobble uridine modification"/>
    <property type="evidence" value="ECO:0007669"/>
    <property type="project" value="TreeGrafter"/>
</dbReference>
<dbReference type="FunFam" id="3.40.50.150:FF:000107">
    <property type="entry name" value="tRNA 5-methylaminomethyl-2-thiouridine biosynthesis bifunctional protein MnmC"/>
    <property type="match status" value="1"/>
</dbReference>
<dbReference type="Gene3D" id="3.30.9.10">
    <property type="entry name" value="D-Amino Acid Oxidase, subunit A, domain 2"/>
    <property type="match status" value="1"/>
</dbReference>
<dbReference type="Gene3D" id="3.50.50.60">
    <property type="entry name" value="FAD/NAD(P)-binding domain"/>
    <property type="match status" value="1"/>
</dbReference>
<dbReference type="Gene3D" id="3.40.50.150">
    <property type="entry name" value="Vaccinia Virus protein VP39"/>
    <property type="match status" value="1"/>
</dbReference>
<dbReference type="HAMAP" id="MF_01102">
    <property type="entry name" value="MnmC"/>
    <property type="match status" value="1"/>
</dbReference>
<dbReference type="InterPro" id="IPR006076">
    <property type="entry name" value="FAD-dep_OxRdtase"/>
</dbReference>
<dbReference type="InterPro" id="IPR036188">
    <property type="entry name" value="FAD/NAD-bd_sf"/>
</dbReference>
<dbReference type="InterPro" id="IPR008471">
    <property type="entry name" value="MnmC-like_methylTransf"/>
</dbReference>
<dbReference type="InterPro" id="IPR029063">
    <property type="entry name" value="SAM-dependent_MTases_sf"/>
</dbReference>
<dbReference type="InterPro" id="IPR023032">
    <property type="entry name" value="tRNA_MAMT_biosynth_bifunc_MnmC"/>
</dbReference>
<dbReference type="InterPro" id="IPR047785">
    <property type="entry name" value="tRNA_MNMC2"/>
</dbReference>
<dbReference type="InterPro" id="IPR017610">
    <property type="entry name" value="tRNA_S-uridine_synth_MnmC_C"/>
</dbReference>
<dbReference type="NCBIfam" id="TIGR03197">
    <property type="entry name" value="MnmC_Cterm"/>
    <property type="match status" value="1"/>
</dbReference>
<dbReference type="NCBIfam" id="NF002481">
    <property type="entry name" value="PRK01747.1-2"/>
    <property type="match status" value="1"/>
</dbReference>
<dbReference type="NCBIfam" id="NF002484">
    <property type="entry name" value="PRK01747.1-5"/>
    <property type="match status" value="1"/>
</dbReference>
<dbReference type="NCBIfam" id="NF033855">
    <property type="entry name" value="tRNA_MNMC2"/>
    <property type="match status" value="1"/>
</dbReference>
<dbReference type="PANTHER" id="PTHR13847">
    <property type="entry name" value="SARCOSINE DEHYDROGENASE-RELATED"/>
    <property type="match status" value="1"/>
</dbReference>
<dbReference type="PANTHER" id="PTHR13847:SF283">
    <property type="entry name" value="TRNA 5-METHYLAMINOMETHYL-2-THIOURIDINE BIOSYNTHESIS BIFUNCTIONAL PROTEIN MNMC"/>
    <property type="match status" value="1"/>
</dbReference>
<dbReference type="Pfam" id="PF01266">
    <property type="entry name" value="DAO"/>
    <property type="match status" value="1"/>
</dbReference>
<dbReference type="Pfam" id="PF05430">
    <property type="entry name" value="Methyltransf_30"/>
    <property type="match status" value="1"/>
</dbReference>
<dbReference type="SUPFAM" id="SSF51905">
    <property type="entry name" value="FAD/NAD(P)-binding domain"/>
    <property type="match status" value="1"/>
</dbReference>
<proteinExistence type="inferred from homology"/>